<organism>
    <name type="scientific">Mycobacterium ulcerans (strain Agy99)</name>
    <dbReference type="NCBI Taxonomy" id="362242"/>
    <lineage>
        <taxon>Bacteria</taxon>
        <taxon>Bacillati</taxon>
        <taxon>Actinomycetota</taxon>
        <taxon>Actinomycetes</taxon>
        <taxon>Mycobacteriales</taxon>
        <taxon>Mycobacteriaceae</taxon>
        <taxon>Mycobacterium</taxon>
        <taxon>Mycobacterium ulcerans group</taxon>
    </lineage>
</organism>
<feature type="chain" id="PRO_0000337659" description="2,3-dihydroxyphenylpropionate/2,3-dihydroxicinnamic acid 1,2-dioxygenase">
    <location>
        <begin position="1"/>
        <end position="313"/>
    </location>
</feature>
<feature type="active site" description="Proton donor" evidence="1">
    <location>
        <position position="115"/>
    </location>
</feature>
<feature type="active site" description="Proton acceptor" evidence="1">
    <location>
        <position position="179"/>
    </location>
</feature>
<accession>A0PL52</accession>
<gene>
    <name evidence="1" type="primary">mhpB</name>
    <name type="ordered locus">MUL_0347</name>
</gene>
<comment type="function">
    <text evidence="1">Catalyzes the non-heme iron(II)-dependent oxidative cleavage of 2,3-dihydroxyphenylpropionic acid and 2,3-dihydroxicinnamic acid into 2-hydroxy-6-ketononadienedioate and 2-hydroxy-6-ketononatrienedioate, respectively.</text>
</comment>
<comment type="catalytic activity">
    <reaction evidence="1">
        <text>3-(2,3-dihydroxyphenyl)propanoate + O2 = (2Z,4E)-2-hydroxy-6-oxonona-2,4-dienedioate + H(+)</text>
        <dbReference type="Rhea" id="RHEA:23840"/>
        <dbReference type="ChEBI" id="CHEBI:15378"/>
        <dbReference type="ChEBI" id="CHEBI:15379"/>
        <dbReference type="ChEBI" id="CHEBI:46951"/>
        <dbReference type="ChEBI" id="CHEBI:66887"/>
        <dbReference type="EC" id="1.13.11.16"/>
    </reaction>
</comment>
<comment type="catalytic activity">
    <reaction evidence="1">
        <text>(2E)-3-(2,3-dihydroxyphenyl)prop-2-enoate + O2 = (2Z,4E,7E)-2-hydroxy-6-oxonona-2,4,7-trienedioate + H(+)</text>
        <dbReference type="Rhea" id="RHEA:25054"/>
        <dbReference type="ChEBI" id="CHEBI:15378"/>
        <dbReference type="ChEBI" id="CHEBI:15379"/>
        <dbReference type="ChEBI" id="CHEBI:58642"/>
        <dbReference type="ChEBI" id="CHEBI:66888"/>
        <dbReference type="EC" id="1.13.11.16"/>
    </reaction>
</comment>
<comment type="cofactor">
    <cofactor evidence="1">
        <name>Fe(2+)</name>
        <dbReference type="ChEBI" id="CHEBI:29033"/>
    </cofactor>
</comment>
<comment type="pathway">
    <text evidence="1">Aromatic compound metabolism; 3-phenylpropanoate degradation.</text>
</comment>
<comment type="subunit">
    <text evidence="1">Homotetramer.</text>
</comment>
<comment type="similarity">
    <text evidence="1">Belongs to the LigB/MhpB extradiol dioxygenase family.</text>
</comment>
<comment type="sequence caution" evidence="2">
    <conflict type="erroneous initiation">
        <sequence resource="EMBL-CDS" id="ABL03071"/>
    </conflict>
</comment>
<sequence length="313" mass="33564">MALALCRMSHSPLLNLPGPRLDLLDEVHAAIAEAAEFVRAYDPDLVVIFSPDHYNGFFYRAMHPFCIGMYASAVGDYGTHIGALDVPTDLAADCAKAVLGADVDVAVSASMDVDHGTVQPLEKLFGTATARPVIPIFINAIAAPLGPLRRCRALGTAVGTFLSTLDLRVLVIGSGGLSHSPPVPTLHSADPQVRERIVHGQPLTPAQRQARQTVVMEAAKSFAAGNSDLQPLNPAWDQRFLEIIDNGHLSDLDRWSNSFVTHEGGSLAHEIRTWISAFAAMAVAGPYQTKVRYYKQAADLIAGFAIRTAVPIP</sequence>
<keyword id="KW-0058">Aromatic hydrocarbons catabolism</keyword>
<keyword id="KW-0223">Dioxygenase</keyword>
<keyword id="KW-0408">Iron</keyword>
<keyword id="KW-0560">Oxidoreductase</keyword>
<dbReference type="EC" id="1.13.11.16" evidence="1"/>
<dbReference type="EMBL" id="CP000325">
    <property type="protein sequence ID" value="ABL03071.1"/>
    <property type="status" value="ALT_INIT"/>
    <property type="molecule type" value="Genomic_DNA"/>
</dbReference>
<dbReference type="SMR" id="A0PL52"/>
<dbReference type="KEGG" id="mul:MUL_0347"/>
<dbReference type="eggNOG" id="COG3384">
    <property type="taxonomic scope" value="Bacteria"/>
</dbReference>
<dbReference type="HOGENOM" id="CLU_078149_0_0_11"/>
<dbReference type="UniPathway" id="UPA00714"/>
<dbReference type="Proteomes" id="UP000000765">
    <property type="component" value="Chromosome"/>
</dbReference>
<dbReference type="GO" id="GO:0047070">
    <property type="term" value="F:3-carboxyethylcatechol 2,3-dioxygenase activity"/>
    <property type="evidence" value="ECO:0007669"/>
    <property type="project" value="UniProtKB-UniRule"/>
</dbReference>
<dbReference type="GO" id="GO:0008198">
    <property type="term" value="F:ferrous iron binding"/>
    <property type="evidence" value="ECO:0007669"/>
    <property type="project" value="InterPro"/>
</dbReference>
<dbReference type="GO" id="GO:0019380">
    <property type="term" value="P:3-phenylpropionate catabolic process"/>
    <property type="evidence" value="ECO:0007669"/>
    <property type="project" value="UniProtKB-UniRule"/>
</dbReference>
<dbReference type="Gene3D" id="3.40.830.10">
    <property type="entry name" value="LigB-like"/>
    <property type="match status" value="1"/>
</dbReference>
<dbReference type="HAMAP" id="MF_01653">
    <property type="entry name" value="MhpB"/>
    <property type="match status" value="1"/>
</dbReference>
<dbReference type="InterPro" id="IPR023789">
    <property type="entry name" value="DHPP/DHXA_dioxygenase"/>
</dbReference>
<dbReference type="InterPro" id="IPR004183">
    <property type="entry name" value="Xdiol_dOase_suB"/>
</dbReference>
<dbReference type="NCBIfam" id="NF009910">
    <property type="entry name" value="PRK13370.1-4"/>
    <property type="match status" value="1"/>
</dbReference>
<dbReference type="Pfam" id="PF02900">
    <property type="entry name" value="LigB"/>
    <property type="match status" value="1"/>
</dbReference>
<dbReference type="SUPFAM" id="SSF53213">
    <property type="entry name" value="LigB-like"/>
    <property type="match status" value="1"/>
</dbReference>
<name>MHPB_MYCUA</name>
<evidence type="ECO:0000255" key="1">
    <source>
        <dbReference type="HAMAP-Rule" id="MF_01653"/>
    </source>
</evidence>
<evidence type="ECO:0000305" key="2"/>
<reference key="1">
    <citation type="journal article" date="2007" name="Genome Res.">
        <title>Reductive evolution and niche adaptation inferred from the genome of Mycobacterium ulcerans, the causative agent of Buruli ulcer.</title>
        <authorList>
            <person name="Stinear T.P."/>
            <person name="Seemann T."/>
            <person name="Pidot S."/>
            <person name="Frigui W."/>
            <person name="Reysset G."/>
            <person name="Garnier T."/>
            <person name="Meurice G."/>
            <person name="Simon D."/>
            <person name="Bouchier C."/>
            <person name="Ma L."/>
            <person name="Tichit M."/>
            <person name="Porter J.L."/>
            <person name="Ryan J."/>
            <person name="Johnson P.D.R."/>
            <person name="Davies J.K."/>
            <person name="Jenkin G.A."/>
            <person name="Small P.L.C."/>
            <person name="Jones L.M."/>
            <person name="Tekaia F."/>
            <person name="Laval F."/>
            <person name="Daffe M."/>
            <person name="Parkhill J."/>
            <person name="Cole S.T."/>
        </authorList>
    </citation>
    <scope>NUCLEOTIDE SEQUENCE [LARGE SCALE GENOMIC DNA]</scope>
    <source>
        <strain>Agy99</strain>
    </source>
</reference>
<protein>
    <recommendedName>
        <fullName evidence="1">2,3-dihydroxyphenylpropionate/2,3-dihydroxicinnamic acid 1,2-dioxygenase</fullName>
        <ecNumber evidence="1">1.13.11.16</ecNumber>
    </recommendedName>
    <alternativeName>
        <fullName evidence="1">3-carboxyethylcatechol 2,3-dioxygenase</fullName>
    </alternativeName>
</protein>
<proteinExistence type="inferred from homology"/>